<name>RBSA_BURMA</name>
<sequence length="506" mass="55486">MDTILALTGITKRFPGVVALRGIDLRVARGEIHALLGENGAGKSTLMKILCGIHPPDEGVIALDGEPRRFANHHDAIAAGVGIVFQEFSLIPELNAVDNLFLGREWRGRLGLRERARMRRAAADIFARLDVAIDLSAPVRELSVAQQQFVEIGKALSLDARLLILDEPTATLTPAEAAHLFGVMRELKRRGVAMIFISHHLDEIFEVCDRITVLRDGQYVGTTEVARTDVGALVEMMVGRRIEQSFPPKPRLARDAAPVLEVDALQVRENGPVNRFALREGEILGFAGLVGSGRTSSALALIGAKPARVRRMRVRGRPVRLADPAAALAAGIGLLPESRKTQGLIPAFSIRHNIAINNLGKHRRLRWFVDAAAETRTTLELMQRLGVKAPTPHTRVDTLSGGNQQKVVIARWLNHHTRILIFDEPTRGIDIGAKAEIYQLMRELSARGYSIVLISSELPEIVGLCDRVAVFRQGRIEAMLEGEAIEPNTVMTYATSDVRGANHEHA</sequence>
<proteinExistence type="inferred from homology"/>
<feature type="chain" id="PRO_0000261046" description="Ribose import ATP-binding protein RbsA">
    <location>
        <begin position="1"/>
        <end position="506"/>
    </location>
</feature>
<feature type="domain" description="ABC transporter 1" evidence="1">
    <location>
        <begin position="5"/>
        <end position="241"/>
    </location>
</feature>
<feature type="domain" description="ABC transporter 2" evidence="1">
    <location>
        <begin position="254"/>
        <end position="498"/>
    </location>
</feature>
<feature type="binding site" evidence="1">
    <location>
        <begin position="37"/>
        <end position="44"/>
    </location>
    <ligand>
        <name>ATP</name>
        <dbReference type="ChEBI" id="CHEBI:30616"/>
    </ligand>
</feature>
<accession>Q62K91</accession>
<comment type="function">
    <text evidence="1">Part of the ABC transporter complex RbsABC involved in ribose import. Responsible for energy coupling to the transport system.</text>
</comment>
<comment type="catalytic activity">
    <reaction evidence="1">
        <text>D-ribose(out) + ATP + H2O = D-ribose(in) + ADP + phosphate + H(+)</text>
        <dbReference type="Rhea" id="RHEA:29903"/>
        <dbReference type="ChEBI" id="CHEBI:15377"/>
        <dbReference type="ChEBI" id="CHEBI:15378"/>
        <dbReference type="ChEBI" id="CHEBI:30616"/>
        <dbReference type="ChEBI" id="CHEBI:43474"/>
        <dbReference type="ChEBI" id="CHEBI:47013"/>
        <dbReference type="ChEBI" id="CHEBI:456216"/>
        <dbReference type="EC" id="7.5.2.7"/>
    </reaction>
</comment>
<comment type="subunit">
    <text evidence="1">The complex is composed of an ATP-binding protein (RbsA), two transmembrane proteins (RbsC) and a solute-binding protein (RbsB).</text>
</comment>
<comment type="subcellular location">
    <subcellularLocation>
        <location evidence="1">Cell inner membrane</location>
        <topology evidence="1">Peripheral membrane protein</topology>
    </subcellularLocation>
</comment>
<comment type="similarity">
    <text evidence="1">Belongs to the ABC transporter superfamily. Ribose importer (TC 3.A.1.2.1) family.</text>
</comment>
<protein>
    <recommendedName>
        <fullName evidence="1">Ribose import ATP-binding protein RbsA</fullName>
        <ecNumber evidence="1">7.5.2.7</ecNumber>
    </recommendedName>
</protein>
<keyword id="KW-0067">ATP-binding</keyword>
<keyword id="KW-0997">Cell inner membrane</keyword>
<keyword id="KW-1003">Cell membrane</keyword>
<keyword id="KW-0472">Membrane</keyword>
<keyword id="KW-0547">Nucleotide-binding</keyword>
<keyword id="KW-1185">Reference proteome</keyword>
<keyword id="KW-0677">Repeat</keyword>
<keyword id="KW-0762">Sugar transport</keyword>
<keyword id="KW-1278">Translocase</keyword>
<keyword id="KW-0813">Transport</keyword>
<reference key="1">
    <citation type="journal article" date="2004" name="Proc. Natl. Acad. Sci. U.S.A.">
        <title>Structural flexibility in the Burkholderia mallei genome.</title>
        <authorList>
            <person name="Nierman W.C."/>
            <person name="DeShazer D."/>
            <person name="Kim H.S."/>
            <person name="Tettelin H."/>
            <person name="Nelson K.E."/>
            <person name="Feldblyum T.V."/>
            <person name="Ulrich R.L."/>
            <person name="Ronning C.M."/>
            <person name="Brinkac L.M."/>
            <person name="Daugherty S.C."/>
            <person name="Davidsen T.D."/>
            <person name="DeBoy R.T."/>
            <person name="Dimitrov G."/>
            <person name="Dodson R.J."/>
            <person name="Durkin A.S."/>
            <person name="Gwinn M.L."/>
            <person name="Haft D.H."/>
            <person name="Khouri H.M."/>
            <person name="Kolonay J.F."/>
            <person name="Madupu R."/>
            <person name="Mohammoud Y."/>
            <person name="Nelson W.C."/>
            <person name="Radune D."/>
            <person name="Romero C.M."/>
            <person name="Sarria S."/>
            <person name="Selengut J."/>
            <person name="Shamblin C."/>
            <person name="Sullivan S.A."/>
            <person name="White O."/>
            <person name="Yu Y."/>
            <person name="Zafar N."/>
            <person name="Zhou L."/>
            <person name="Fraser C.M."/>
        </authorList>
    </citation>
    <scope>NUCLEOTIDE SEQUENCE [LARGE SCALE GENOMIC DNA]</scope>
    <source>
        <strain>ATCC 23344</strain>
    </source>
</reference>
<evidence type="ECO:0000255" key="1">
    <source>
        <dbReference type="HAMAP-Rule" id="MF_01716"/>
    </source>
</evidence>
<organism>
    <name type="scientific">Burkholderia mallei (strain ATCC 23344)</name>
    <dbReference type="NCBI Taxonomy" id="243160"/>
    <lineage>
        <taxon>Bacteria</taxon>
        <taxon>Pseudomonadati</taxon>
        <taxon>Pseudomonadota</taxon>
        <taxon>Betaproteobacteria</taxon>
        <taxon>Burkholderiales</taxon>
        <taxon>Burkholderiaceae</taxon>
        <taxon>Burkholderia</taxon>
        <taxon>pseudomallei group</taxon>
    </lineage>
</organism>
<gene>
    <name evidence="1" type="primary">rbsA</name>
    <name type="ordered locus">BMA1197</name>
</gene>
<dbReference type="EC" id="7.5.2.7" evidence="1"/>
<dbReference type="EMBL" id="CP000010">
    <property type="protein sequence ID" value="AAU47450.1"/>
    <property type="molecule type" value="Genomic_DNA"/>
</dbReference>
<dbReference type="RefSeq" id="YP_102878.1">
    <property type="nucleotide sequence ID" value="NC_006348.1"/>
</dbReference>
<dbReference type="SMR" id="Q62K91"/>
<dbReference type="KEGG" id="bma:BMA1197"/>
<dbReference type="PATRIC" id="fig|243160.12.peg.1233"/>
<dbReference type="eggNOG" id="COG1129">
    <property type="taxonomic scope" value="Bacteria"/>
</dbReference>
<dbReference type="HOGENOM" id="CLU_000604_92_3_4"/>
<dbReference type="Proteomes" id="UP000006693">
    <property type="component" value="Chromosome 1"/>
</dbReference>
<dbReference type="GO" id="GO:0005886">
    <property type="term" value="C:plasma membrane"/>
    <property type="evidence" value="ECO:0007669"/>
    <property type="project" value="UniProtKB-SubCell"/>
</dbReference>
<dbReference type="GO" id="GO:0015611">
    <property type="term" value="F:ABC-type D-ribose transporter activity"/>
    <property type="evidence" value="ECO:0007669"/>
    <property type="project" value="UniProtKB-EC"/>
</dbReference>
<dbReference type="GO" id="GO:0005524">
    <property type="term" value="F:ATP binding"/>
    <property type="evidence" value="ECO:0007669"/>
    <property type="project" value="UniProtKB-KW"/>
</dbReference>
<dbReference type="GO" id="GO:0016887">
    <property type="term" value="F:ATP hydrolysis activity"/>
    <property type="evidence" value="ECO:0007669"/>
    <property type="project" value="InterPro"/>
</dbReference>
<dbReference type="CDD" id="cd03216">
    <property type="entry name" value="ABC_Carb_Monos_I"/>
    <property type="match status" value="1"/>
</dbReference>
<dbReference type="CDD" id="cd03215">
    <property type="entry name" value="ABC_Carb_Monos_II"/>
    <property type="match status" value="1"/>
</dbReference>
<dbReference type="FunFam" id="3.40.50.300:FF:000127">
    <property type="entry name" value="Ribose import ATP-binding protein RbsA"/>
    <property type="match status" value="1"/>
</dbReference>
<dbReference type="Gene3D" id="3.40.50.300">
    <property type="entry name" value="P-loop containing nucleotide triphosphate hydrolases"/>
    <property type="match status" value="2"/>
</dbReference>
<dbReference type="InterPro" id="IPR003593">
    <property type="entry name" value="AAA+_ATPase"/>
</dbReference>
<dbReference type="InterPro" id="IPR050107">
    <property type="entry name" value="ABC_carbohydrate_import_ATPase"/>
</dbReference>
<dbReference type="InterPro" id="IPR003439">
    <property type="entry name" value="ABC_transporter-like_ATP-bd"/>
</dbReference>
<dbReference type="InterPro" id="IPR017871">
    <property type="entry name" value="ABC_transporter-like_CS"/>
</dbReference>
<dbReference type="InterPro" id="IPR027417">
    <property type="entry name" value="P-loop_NTPase"/>
</dbReference>
<dbReference type="PANTHER" id="PTHR43790">
    <property type="entry name" value="CARBOHYDRATE TRANSPORT ATP-BINDING PROTEIN MG119-RELATED"/>
    <property type="match status" value="1"/>
</dbReference>
<dbReference type="PANTHER" id="PTHR43790:SF3">
    <property type="entry name" value="D-ALLOSE IMPORT ATP-BINDING PROTEIN ALSA-RELATED"/>
    <property type="match status" value="1"/>
</dbReference>
<dbReference type="Pfam" id="PF00005">
    <property type="entry name" value="ABC_tran"/>
    <property type="match status" value="2"/>
</dbReference>
<dbReference type="SMART" id="SM00382">
    <property type="entry name" value="AAA"/>
    <property type="match status" value="2"/>
</dbReference>
<dbReference type="SUPFAM" id="SSF52540">
    <property type="entry name" value="P-loop containing nucleoside triphosphate hydrolases"/>
    <property type="match status" value="2"/>
</dbReference>
<dbReference type="PROSITE" id="PS00211">
    <property type="entry name" value="ABC_TRANSPORTER_1"/>
    <property type="match status" value="1"/>
</dbReference>
<dbReference type="PROSITE" id="PS50893">
    <property type="entry name" value="ABC_TRANSPORTER_2"/>
    <property type="match status" value="2"/>
</dbReference>
<dbReference type="PROSITE" id="PS51254">
    <property type="entry name" value="RBSA"/>
    <property type="match status" value="1"/>
</dbReference>